<proteinExistence type="evidence at protein level"/>
<reference key="1">
    <citation type="journal article" date="2014" name="Genome Announc.">
        <title>Complete Genome Assembly of Escherichia coli ATCC 25922, a Serotype O6 Reference Strain.</title>
        <authorList>
            <person name="Minogue T.D."/>
            <person name="Daligault H.A."/>
            <person name="Davenport K.W."/>
            <person name="Bishop-Lilly K.A."/>
            <person name="Broomall S.M."/>
            <person name="Bruce D.C."/>
            <person name="Chain P.S."/>
            <person name="Chertkov O."/>
            <person name="Coyne S.R."/>
            <person name="Freitas T."/>
            <person name="Frey K.G."/>
            <person name="Gibbons H.S."/>
            <person name="Jaissle J."/>
            <person name="Redden C.L."/>
            <person name="Rosenzweig C.N."/>
            <person name="Xu Y."/>
            <person name="Johnson S.L."/>
        </authorList>
    </citation>
    <scope>NUCLEOTIDE SEQUENCE [LARGE SCALE GENOMIC DNA]</scope>
    <source>
        <strain>ATCC 25922 / DSM 1103 / LMG 8223 / NCIMB 12210 / NCTC 12241 / WDCM 00013 / Seattle 1946</strain>
    </source>
</reference>
<reference key="2">
    <citation type="journal article" date="2022" name="Proc. Natl. Acad. Sci. U.S.A.">
        <title>Sequential rescue and repair of stalled and damaged ribosome by bacterial PrfH and RtcB.</title>
        <authorList>
            <person name="Tian Y."/>
            <person name="Zeng F."/>
            <person name="Raybarman A."/>
            <person name="Fatma S."/>
            <person name="Carruthers A."/>
            <person name="Li Q."/>
            <person name="Huang R.H."/>
        </authorList>
    </citation>
    <scope>FUNCTION</scope>
    <scope>CATALYTIC ACTIVITY</scope>
    <scope>MUTAGENESIS OF HIS-294</scope>
    <source>
        <strain>ATCC 25922 / DSM 1103 / LMG 8223 / NCIMB 12210 / NCTC 12241 / WDCM 00013 / Seattle 1946</strain>
    </source>
</reference>
<feature type="chain" id="PRO_0000459657" description="RNA-splicing ligase RtcB2">
    <location>
        <begin position="1"/>
        <end position="379"/>
    </location>
</feature>
<feature type="active site" description="GMP-histidine intermediate" evidence="2">
    <location>
        <position position="294"/>
    </location>
</feature>
<feature type="binding site" evidence="1">
    <location>
        <position position="74"/>
    </location>
    <ligand>
        <name>Mn(2+)</name>
        <dbReference type="ChEBI" id="CHEBI:29035"/>
        <label>1</label>
    </ligand>
</feature>
<feature type="binding site" evidence="1">
    <location>
        <position position="77"/>
    </location>
    <ligand>
        <name>Mn(2+)</name>
        <dbReference type="ChEBI" id="CHEBI:29035"/>
        <label>1</label>
    </ligand>
</feature>
<feature type="binding site" evidence="1">
    <location>
        <position position="77"/>
    </location>
    <ligand>
        <name>Mn(2+)</name>
        <dbReference type="ChEBI" id="CHEBI:29035"/>
        <label>2</label>
    </ligand>
</feature>
<feature type="binding site" evidence="1">
    <location>
        <begin position="136"/>
        <end position="140"/>
    </location>
    <ligand>
        <name>GMP</name>
        <dbReference type="ChEBI" id="CHEBI:58115"/>
    </ligand>
</feature>
<feature type="binding site" evidence="1">
    <location>
        <position position="137"/>
    </location>
    <ligand>
        <name>Mn(2+)</name>
        <dbReference type="ChEBI" id="CHEBI:29035"/>
        <label>1</label>
    </ligand>
</feature>
<feature type="binding site" evidence="1">
    <location>
        <position position="168"/>
    </location>
    <ligand>
        <name>Mn(2+)</name>
        <dbReference type="ChEBI" id="CHEBI:29035"/>
        <label>2</label>
    </ligand>
</feature>
<feature type="binding site" evidence="1">
    <location>
        <begin position="239"/>
        <end position="240"/>
    </location>
    <ligand>
        <name>GMP</name>
        <dbReference type="ChEBI" id="CHEBI:58115"/>
    </ligand>
</feature>
<feature type="binding site" evidence="1">
    <location>
        <position position="239"/>
    </location>
    <ligand>
        <name>Mn(2+)</name>
        <dbReference type="ChEBI" id="CHEBI:29035"/>
        <label>2</label>
    </ligand>
</feature>
<feature type="binding site" evidence="1">
    <location>
        <position position="277"/>
    </location>
    <ligand>
        <name>GMP</name>
        <dbReference type="ChEBI" id="CHEBI:58115"/>
    </ligand>
</feature>
<feature type="binding site" evidence="1">
    <location>
        <begin position="294"/>
        <end position="297"/>
    </location>
    <ligand>
        <name>GMP</name>
        <dbReference type="ChEBI" id="CHEBI:58115"/>
    </ligand>
</feature>
<feature type="binding site" evidence="1">
    <location>
        <position position="372"/>
    </location>
    <ligand>
        <name>GMP</name>
        <dbReference type="ChEBI" id="CHEBI:58115"/>
    </ligand>
</feature>
<feature type="mutagenesis site" description="Very weakly aids PrhF in reversing growth inhibition due to ColE3 expression in vivo." evidence="3">
    <original>H</original>
    <variation>N</variation>
    <location>
        <position position="294"/>
    </location>
</feature>
<evidence type="ECO:0000250" key="1">
    <source>
        <dbReference type="UniProtKB" id="O59245"/>
    </source>
</evidence>
<evidence type="ECO:0000250" key="2">
    <source>
        <dbReference type="UniProtKB" id="P46850"/>
    </source>
</evidence>
<evidence type="ECO:0000269" key="3">
    <source>
    </source>
</evidence>
<evidence type="ECO:0000303" key="4">
    <source>
    </source>
</evidence>
<evidence type="ECO:0000305" key="5">
    <source>
    </source>
</evidence>
<name>RTCB2_ECOS1</name>
<sequence length="379" mass="41518">MGKYIRPLSDAVFTIASDDLWIESLAIQQLHTTANLPNMQRVVGMPDLHPGRGYPIGAAFFSVGRFYPALVGNDIGCGMALWQTDILARKYNADKFEKRLSDLDDVAEESWLEENLPSAFAQHPWRNSLGSIGGGNHFVELQQIDQIIDAELFALAGLDAQHLQLLVHSGSRGLGQSILQRHIASFSHHGLPEGSDDALRYIAEHDDALAFARINRQLIALRIMQQVKATGSPVLDVAHNFVSACQIGDQQGWLHRKGATPDDNGLVIIPGSRGDYSWLVKPVANEKTLHSLAHGAGRKWGRTECKGRLAAKYTATQLSRTELGSRVICRDKQLIFEEAPQAYKSAESVVQCLVLAGLIIPVARLRPVLTLKNSGGKKG</sequence>
<gene>
    <name evidence="4" type="primary">rtcB2</name>
    <name type="ORF">DR76_4673</name>
</gene>
<accession>P0DX91</accession>
<organism>
    <name type="scientific">Escherichia coli (strain ATCC 25922 / DSM 1103 / LMG 8223 / NCIMB 12210 / NCTC 12241 / WDCM 00013 / Seattle 1946)</name>
    <dbReference type="NCBI Taxonomy" id="1322345"/>
    <lineage>
        <taxon>Bacteria</taxon>
        <taxon>Pseudomonadati</taxon>
        <taxon>Pseudomonadota</taxon>
        <taxon>Gammaproteobacteria</taxon>
        <taxon>Enterobacterales</taxon>
        <taxon>Enterobacteriaceae</taxon>
        <taxon>Escherichia</taxon>
    </lineage>
</organism>
<comment type="function">
    <text evidence="3">GTP-dependent RNA ligase involved in rRNA repair (PubMed:35858322). Repairs damaged 16S rRNA in 30S subunits that has been cleaved between adenine-1493 and guanosine-1494 (E.coli nubering) (PubMed:35858322). This specific cleavage is inflicted by CdiA (ECL_04451) or by colicin E3-type (ColE3) proteins (PubMed:35858322). Poorly repairs damaged rRNA in the 70S ribosome; addition of release factor PrfH improves repair about 3-fold in vitro, probably because PrfH hydrolyzes the nascent chain allowing ribosomal subunit dissociation (PubMed:35858322). In vivo the PrfH-RtcB2 pair restores growth in the presence of ribotoxins that specifically create this damage (PubMed:35858322). Does not repair damaged tRNA (tested with tRNA(Asp) and tRNA(Arg)) (PubMed:35858322).</text>
</comment>
<comment type="catalytic activity">
    <reaction evidence="5">
        <text>a 3'-end 3'-phospho-ribonucleotide-RNA + a 5'-end dephospho-ribonucleoside-RNA + GTP = a ribonucleotidyl-ribonucleotide-RNA + GMP + diphosphate</text>
        <dbReference type="Rhea" id="RHEA:68076"/>
        <dbReference type="Rhea" id="RHEA-COMP:10463"/>
        <dbReference type="Rhea" id="RHEA-COMP:13936"/>
        <dbReference type="Rhea" id="RHEA-COMP:17355"/>
        <dbReference type="ChEBI" id="CHEBI:33019"/>
        <dbReference type="ChEBI" id="CHEBI:37565"/>
        <dbReference type="ChEBI" id="CHEBI:58115"/>
        <dbReference type="ChEBI" id="CHEBI:83062"/>
        <dbReference type="ChEBI" id="CHEBI:138284"/>
        <dbReference type="ChEBI" id="CHEBI:173118"/>
        <dbReference type="EC" id="6.5.1.8"/>
    </reaction>
</comment>
<comment type="cofactor">
    <cofactor evidence="2">
        <name>Mn(2+)</name>
        <dbReference type="ChEBI" id="CHEBI:29035"/>
    </cofactor>
    <text evidence="1">Binds 2 manganese ions per subunit.</text>
</comment>
<comment type="miscellaneous">
    <text evidence="2">Ligation proceeds through 3 nucleotidyl transfer steps, with 2',3'-cyclic phosphate termini being hydrolyzed to 3'-P termini in a step that precedes 3'-P activation with GMP. In the first nucleotidyl transfer step, RtcB2 reacts with GTP to form a covalent RtcB-histidine-GMP intermediate with release of PPi; in the second step, the GMP moiety is transferred to the RNA 3'-P; in the third step, the 5'-OH from the opposite RNA strand attacks the activated 3'-P to form a 3',5'-phosphodiester bond and release GMP.</text>
</comment>
<comment type="similarity">
    <text evidence="5">Belongs to the RtcB family. RtcB2 subfamily.</text>
</comment>
<protein>
    <recommendedName>
        <fullName evidence="4">RNA-splicing ligase RtcB2</fullName>
        <ecNumber evidence="5">6.5.1.8</ecNumber>
    </recommendedName>
</protein>
<keyword id="KW-0342">GTP-binding</keyword>
<keyword id="KW-0436">Ligase</keyword>
<keyword id="KW-0464">Manganese</keyword>
<keyword id="KW-0479">Metal-binding</keyword>
<keyword id="KW-0547">Nucleotide-binding</keyword>
<keyword id="KW-0692">RNA repair</keyword>
<dbReference type="EC" id="6.5.1.8" evidence="5"/>
<dbReference type="EMBL" id="CP009072">
    <property type="protein sequence ID" value="AIL15495.1"/>
    <property type="molecule type" value="Genomic_DNA"/>
</dbReference>
<dbReference type="RefSeq" id="WP_000521562.1">
    <property type="nucleotide sequence ID" value="NZ_LRDO01000042.1"/>
</dbReference>
<dbReference type="SMR" id="P0DX91"/>
<dbReference type="GO" id="GO:0005525">
    <property type="term" value="F:GTP binding"/>
    <property type="evidence" value="ECO:0007669"/>
    <property type="project" value="UniProtKB-KW"/>
</dbReference>
<dbReference type="GO" id="GO:0046872">
    <property type="term" value="F:metal ion binding"/>
    <property type="evidence" value="ECO:0007669"/>
    <property type="project" value="UniProtKB-KW"/>
</dbReference>
<dbReference type="GO" id="GO:0003972">
    <property type="term" value="F:RNA ligase (ATP) activity"/>
    <property type="evidence" value="ECO:0007669"/>
    <property type="project" value="TreeGrafter"/>
</dbReference>
<dbReference type="GO" id="GO:0006396">
    <property type="term" value="P:RNA processing"/>
    <property type="evidence" value="ECO:0007669"/>
    <property type="project" value="InterPro"/>
</dbReference>
<dbReference type="GO" id="GO:0042245">
    <property type="term" value="P:RNA repair"/>
    <property type="evidence" value="ECO:0007669"/>
    <property type="project" value="UniProtKB-KW"/>
</dbReference>
<dbReference type="Gene3D" id="3.90.1860.10">
    <property type="entry name" value="tRNA-splicing ligase RtcB"/>
    <property type="match status" value="1"/>
</dbReference>
<dbReference type="InterPro" id="IPR001233">
    <property type="entry name" value="RtcB"/>
</dbReference>
<dbReference type="InterPro" id="IPR036025">
    <property type="entry name" value="RtcB-like_sf"/>
</dbReference>
<dbReference type="InterPro" id="IPR017510">
    <property type="entry name" value="RtcB2"/>
</dbReference>
<dbReference type="NCBIfam" id="NF007153">
    <property type="entry name" value="PRK09588.1"/>
    <property type="match status" value="1"/>
</dbReference>
<dbReference type="NCBIfam" id="TIGR03073">
    <property type="entry name" value="release_rtcB"/>
    <property type="match status" value="1"/>
</dbReference>
<dbReference type="PANTHER" id="PTHR11118">
    <property type="entry name" value="RNA-SPLICING LIGASE RTCB HOMOLOG"/>
    <property type="match status" value="1"/>
</dbReference>
<dbReference type="PANTHER" id="PTHR11118:SF1">
    <property type="entry name" value="RNA-SPLICING LIGASE RTCB HOMOLOG"/>
    <property type="match status" value="1"/>
</dbReference>
<dbReference type="Pfam" id="PF01139">
    <property type="entry name" value="RtcB"/>
    <property type="match status" value="2"/>
</dbReference>
<dbReference type="SUPFAM" id="SSF103365">
    <property type="entry name" value="Hypothetical protein PH1602"/>
    <property type="match status" value="1"/>
</dbReference>